<keyword id="KW-0030">Aminoacyl-tRNA synthetase</keyword>
<keyword id="KW-0067">ATP-binding</keyword>
<keyword id="KW-0963">Cytoplasm</keyword>
<keyword id="KW-0436">Ligase</keyword>
<keyword id="KW-0479">Metal-binding</keyword>
<keyword id="KW-0547">Nucleotide-binding</keyword>
<keyword id="KW-0648">Protein biosynthesis</keyword>
<keyword id="KW-0694">RNA-binding</keyword>
<keyword id="KW-0820">tRNA-binding</keyword>
<keyword id="KW-0862">Zinc</keyword>
<comment type="function">
    <text evidence="1">Catalyzes the attachment of threonine to tRNA(Thr) in a two-step reaction: L-threonine is first activated by ATP to form Thr-AMP and then transferred to the acceptor end of tRNA(Thr). Also edits incorrectly charged L-seryl-tRNA(Thr).</text>
</comment>
<comment type="catalytic activity">
    <reaction evidence="1">
        <text>tRNA(Thr) + L-threonine + ATP = L-threonyl-tRNA(Thr) + AMP + diphosphate + H(+)</text>
        <dbReference type="Rhea" id="RHEA:24624"/>
        <dbReference type="Rhea" id="RHEA-COMP:9670"/>
        <dbReference type="Rhea" id="RHEA-COMP:9704"/>
        <dbReference type="ChEBI" id="CHEBI:15378"/>
        <dbReference type="ChEBI" id="CHEBI:30616"/>
        <dbReference type="ChEBI" id="CHEBI:33019"/>
        <dbReference type="ChEBI" id="CHEBI:57926"/>
        <dbReference type="ChEBI" id="CHEBI:78442"/>
        <dbReference type="ChEBI" id="CHEBI:78534"/>
        <dbReference type="ChEBI" id="CHEBI:456215"/>
        <dbReference type="EC" id="6.1.1.3"/>
    </reaction>
</comment>
<comment type="cofactor">
    <cofactor evidence="1">
        <name>Zn(2+)</name>
        <dbReference type="ChEBI" id="CHEBI:29105"/>
    </cofactor>
    <text evidence="1">Binds 1 zinc ion per subunit.</text>
</comment>
<comment type="subunit">
    <text evidence="1">Homodimer.</text>
</comment>
<comment type="subcellular location">
    <subcellularLocation>
        <location evidence="1">Cytoplasm</location>
    </subcellularLocation>
</comment>
<comment type="similarity">
    <text evidence="1">Belongs to the class-II aminoacyl-tRNA synthetase family.</text>
</comment>
<organism>
    <name type="scientific">Vibrio vulnificus (strain CMCP6)</name>
    <dbReference type="NCBI Taxonomy" id="216895"/>
    <lineage>
        <taxon>Bacteria</taxon>
        <taxon>Pseudomonadati</taxon>
        <taxon>Pseudomonadota</taxon>
        <taxon>Gammaproteobacteria</taxon>
        <taxon>Vibrionales</taxon>
        <taxon>Vibrionaceae</taxon>
        <taxon>Vibrio</taxon>
    </lineage>
</organism>
<name>SYT_VIBVU</name>
<evidence type="ECO:0000255" key="1">
    <source>
        <dbReference type="HAMAP-Rule" id="MF_00184"/>
    </source>
</evidence>
<evidence type="ECO:0000255" key="2">
    <source>
        <dbReference type="PROSITE-ProRule" id="PRU01228"/>
    </source>
</evidence>
<protein>
    <recommendedName>
        <fullName evidence="1">Threonine--tRNA ligase</fullName>
        <ecNumber evidence="1">6.1.1.3</ecNumber>
    </recommendedName>
    <alternativeName>
        <fullName evidence="1">Threonyl-tRNA synthetase</fullName>
        <shortName evidence="1">ThrRS</shortName>
    </alternativeName>
</protein>
<feature type="chain" id="PRO_0000101084" description="Threonine--tRNA ligase">
    <location>
        <begin position="1"/>
        <end position="642"/>
    </location>
</feature>
<feature type="domain" description="TGS" evidence="2">
    <location>
        <begin position="1"/>
        <end position="61"/>
    </location>
</feature>
<feature type="region of interest" description="Catalytic" evidence="1">
    <location>
        <begin position="244"/>
        <end position="535"/>
    </location>
</feature>
<feature type="binding site" evidence="1">
    <location>
        <position position="335"/>
    </location>
    <ligand>
        <name>Zn(2+)</name>
        <dbReference type="ChEBI" id="CHEBI:29105"/>
    </ligand>
</feature>
<feature type="binding site" evidence="1">
    <location>
        <position position="386"/>
    </location>
    <ligand>
        <name>Zn(2+)</name>
        <dbReference type="ChEBI" id="CHEBI:29105"/>
    </ligand>
</feature>
<feature type="binding site" evidence="1">
    <location>
        <position position="512"/>
    </location>
    <ligand>
        <name>Zn(2+)</name>
        <dbReference type="ChEBI" id="CHEBI:29105"/>
    </ligand>
</feature>
<accession>Q8DA13</accession>
<proteinExistence type="inferred from homology"/>
<gene>
    <name evidence="1" type="primary">thrS</name>
    <name type="ordered locus">VV1_2397</name>
</gene>
<reference key="1">
    <citation type="submission" date="2002-12" db="EMBL/GenBank/DDBJ databases">
        <title>Complete genome sequence of Vibrio vulnificus CMCP6.</title>
        <authorList>
            <person name="Rhee J.H."/>
            <person name="Kim S.Y."/>
            <person name="Chung S.S."/>
            <person name="Kim J.J."/>
            <person name="Moon Y.H."/>
            <person name="Jeong H."/>
            <person name="Choy H.E."/>
        </authorList>
    </citation>
    <scope>NUCLEOTIDE SEQUENCE [LARGE SCALE GENOMIC DNA]</scope>
    <source>
        <strain>CMCP6</strain>
    </source>
</reference>
<sequence>MPIITLPDGSQRQFDNPVSTMDVALSIGPGLAKATIAGRVNGQRVDACDLIEEDASLEIITTKDEVDGLEIVRHSCAHLLGHALKQLYPNAKMAIGPTIDNGFYYDIDLEESLTQEDLEKIEARMKALAKTKYQVIKKKVSWQEARDAFEARGETYKMEILDENVSRDDRPGLYHHEEYIDMCRGPHVPNMSFCQHFTLLNVAGAYWRGNSDNKMLQRIYGTAFHDKKALKDHLTRLEEAAKRDHRKIGKQLDLFHMQQEAPGMVFWHHNGWSVFRDLEVFIREKLTEYGYQEVKGPLMMDRVLWERSGHWDKYADAMFTTSSENREYAIKPMNCPGHVQIFNQGLKSYRDLPLRMAEFGSCHRNEPSGALHGIMRVRGFTQDDAHIFCTESQIQDEVTNCIKMVYDTYQTFGFDNIAVKLSTRPEQRVGSDEIWDQSEEALKQALESMDIAYEIQEGEGAFYGPKIEFTLFDCLGRAWQCGTVQLDFNLPNRLGATYVGENNERLVPVMIHRAILGSLERFIGILIEEYAGFFPTWLAPEQAVIMNITDKQADYVQEIAQKLQKCGIRAKADLRNEKIGFKIREHTLKRVPFMLVCGDQEMEAGEIAVRTRKGNDLGKFKVDDFVSYIQDQIASRKLNLEE</sequence>
<dbReference type="EC" id="6.1.1.3" evidence="1"/>
<dbReference type="EMBL" id="AE016795">
    <property type="protein sequence ID" value="AAO10771.1"/>
    <property type="molecule type" value="Genomic_DNA"/>
</dbReference>
<dbReference type="RefSeq" id="WP_011080263.1">
    <property type="nucleotide sequence ID" value="NC_004459.3"/>
</dbReference>
<dbReference type="SMR" id="Q8DA13"/>
<dbReference type="KEGG" id="vvu:VV1_2397"/>
<dbReference type="HOGENOM" id="CLU_008554_0_1_6"/>
<dbReference type="Proteomes" id="UP000002275">
    <property type="component" value="Chromosome 1"/>
</dbReference>
<dbReference type="GO" id="GO:0005829">
    <property type="term" value="C:cytosol"/>
    <property type="evidence" value="ECO:0007669"/>
    <property type="project" value="TreeGrafter"/>
</dbReference>
<dbReference type="GO" id="GO:0005524">
    <property type="term" value="F:ATP binding"/>
    <property type="evidence" value="ECO:0007669"/>
    <property type="project" value="UniProtKB-UniRule"/>
</dbReference>
<dbReference type="GO" id="GO:0046872">
    <property type="term" value="F:metal ion binding"/>
    <property type="evidence" value="ECO:0007669"/>
    <property type="project" value="UniProtKB-KW"/>
</dbReference>
<dbReference type="GO" id="GO:0004829">
    <property type="term" value="F:threonine-tRNA ligase activity"/>
    <property type="evidence" value="ECO:0007669"/>
    <property type="project" value="UniProtKB-UniRule"/>
</dbReference>
<dbReference type="GO" id="GO:0000049">
    <property type="term" value="F:tRNA binding"/>
    <property type="evidence" value="ECO:0007669"/>
    <property type="project" value="UniProtKB-KW"/>
</dbReference>
<dbReference type="GO" id="GO:0006435">
    <property type="term" value="P:threonyl-tRNA aminoacylation"/>
    <property type="evidence" value="ECO:0007669"/>
    <property type="project" value="UniProtKB-UniRule"/>
</dbReference>
<dbReference type="CDD" id="cd01667">
    <property type="entry name" value="TGS_ThrRS"/>
    <property type="match status" value="1"/>
</dbReference>
<dbReference type="CDD" id="cd00860">
    <property type="entry name" value="ThrRS_anticodon"/>
    <property type="match status" value="1"/>
</dbReference>
<dbReference type="CDD" id="cd00771">
    <property type="entry name" value="ThrRS_core"/>
    <property type="match status" value="1"/>
</dbReference>
<dbReference type="FunFam" id="3.10.20.30:FF:000005">
    <property type="entry name" value="Threonine--tRNA ligase"/>
    <property type="match status" value="1"/>
</dbReference>
<dbReference type="FunFam" id="3.30.54.20:FF:000002">
    <property type="entry name" value="Threonine--tRNA ligase"/>
    <property type="match status" value="1"/>
</dbReference>
<dbReference type="FunFam" id="3.30.930.10:FF:000002">
    <property type="entry name" value="Threonine--tRNA ligase"/>
    <property type="match status" value="1"/>
</dbReference>
<dbReference type="FunFam" id="3.40.50.800:FF:000001">
    <property type="entry name" value="Threonine--tRNA ligase"/>
    <property type="match status" value="1"/>
</dbReference>
<dbReference type="FunFam" id="3.30.980.10:FF:000005">
    <property type="entry name" value="Threonyl-tRNA synthetase, mitochondrial"/>
    <property type="match status" value="1"/>
</dbReference>
<dbReference type="Gene3D" id="3.10.20.30">
    <property type="match status" value="1"/>
</dbReference>
<dbReference type="Gene3D" id="3.30.54.20">
    <property type="match status" value="1"/>
</dbReference>
<dbReference type="Gene3D" id="3.40.50.800">
    <property type="entry name" value="Anticodon-binding domain"/>
    <property type="match status" value="1"/>
</dbReference>
<dbReference type="Gene3D" id="3.30.930.10">
    <property type="entry name" value="Bira Bifunctional Protein, Domain 2"/>
    <property type="match status" value="1"/>
</dbReference>
<dbReference type="Gene3D" id="3.30.980.10">
    <property type="entry name" value="Threonyl-trna Synthetase, Chain A, domain 2"/>
    <property type="match status" value="1"/>
</dbReference>
<dbReference type="HAMAP" id="MF_00184">
    <property type="entry name" value="Thr_tRNA_synth"/>
    <property type="match status" value="1"/>
</dbReference>
<dbReference type="InterPro" id="IPR002314">
    <property type="entry name" value="aa-tRNA-synt_IIb"/>
</dbReference>
<dbReference type="InterPro" id="IPR006195">
    <property type="entry name" value="aa-tRNA-synth_II"/>
</dbReference>
<dbReference type="InterPro" id="IPR045864">
    <property type="entry name" value="aa-tRNA-synth_II/BPL/LPL"/>
</dbReference>
<dbReference type="InterPro" id="IPR004154">
    <property type="entry name" value="Anticodon-bd"/>
</dbReference>
<dbReference type="InterPro" id="IPR036621">
    <property type="entry name" value="Anticodon-bd_dom_sf"/>
</dbReference>
<dbReference type="InterPro" id="IPR012675">
    <property type="entry name" value="Beta-grasp_dom_sf"/>
</dbReference>
<dbReference type="InterPro" id="IPR004095">
    <property type="entry name" value="TGS"/>
</dbReference>
<dbReference type="InterPro" id="IPR012676">
    <property type="entry name" value="TGS-like"/>
</dbReference>
<dbReference type="InterPro" id="IPR002320">
    <property type="entry name" value="Thr-tRNA-ligase_IIa"/>
</dbReference>
<dbReference type="InterPro" id="IPR018163">
    <property type="entry name" value="Thr/Ala-tRNA-synth_IIc_edit"/>
</dbReference>
<dbReference type="InterPro" id="IPR047246">
    <property type="entry name" value="ThrRS_anticodon"/>
</dbReference>
<dbReference type="InterPro" id="IPR033728">
    <property type="entry name" value="ThrRS_core"/>
</dbReference>
<dbReference type="InterPro" id="IPR012947">
    <property type="entry name" value="tRNA_SAD"/>
</dbReference>
<dbReference type="NCBIfam" id="TIGR00418">
    <property type="entry name" value="thrS"/>
    <property type="match status" value="1"/>
</dbReference>
<dbReference type="PANTHER" id="PTHR11451:SF44">
    <property type="entry name" value="THREONINE--TRNA LIGASE, CHLOROPLASTIC_MITOCHONDRIAL 2"/>
    <property type="match status" value="1"/>
</dbReference>
<dbReference type="PANTHER" id="PTHR11451">
    <property type="entry name" value="THREONINE-TRNA LIGASE"/>
    <property type="match status" value="1"/>
</dbReference>
<dbReference type="Pfam" id="PF03129">
    <property type="entry name" value="HGTP_anticodon"/>
    <property type="match status" value="1"/>
</dbReference>
<dbReference type="Pfam" id="PF02824">
    <property type="entry name" value="TGS"/>
    <property type="match status" value="1"/>
</dbReference>
<dbReference type="Pfam" id="PF00587">
    <property type="entry name" value="tRNA-synt_2b"/>
    <property type="match status" value="1"/>
</dbReference>
<dbReference type="Pfam" id="PF07973">
    <property type="entry name" value="tRNA_SAD"/>
    <property type="match status" value="1"/>
</dbReference>
<dbReference type="PRINTS" id="PR01047">
    <property type="entry name" value="TRNASYNTHTHR"/>
</dbReference>
<dbReference type="SMART" id="SM00863">
    <property type="entry name" value="tRNA_SAD"/>
    <property type="match status" value="1"/>
</dbReference>
<dbReference type="SUPFAM" id="SSF52954">
    <property type="entry name" value="Class II aaRS ABD-related"/>
    <property type="match status" value="1"/>
</dbReference>
<dbReference type="SUPFAM" id="SSF55681">
    <property type="entry name" value="Class II aaRS and biotin synthetases"/>
    <property type="match status" value="1"/>
</dbReference>
<dbReference type="SUPFAM" id="SSF81271">
    <property type="entry name" value="TGS-like"/>
    <property type="match status" value="1"/>
</dbReference>
<dbReference type="SUPFAM" id="SSF55186">
    <property type="entry name" value="ThrRS/AlaRS common domain"/>
    <property type="match status" value="1"/>
</dbReference>
<dbReference type="PROSITE" id="PS50862">
    <property type="entry name" value="AA_TRNA_LIGASE_II"/>
    <property type="match status" value="1"/>
</dbReference>
<dbReference type="PROSITE" id="PS51880">
    <property type="entry name" value="TGS"/>
    <property type="match status" value="1"/>
</dbReference>